<comment type="function">
    <text evidence="1 5 6 7 8 12 13 14 15 16 18 20 22 23 24 27 28 29 31 32 35 37 40 41">Zinc-finger RNA-binding protein that destabilizes numerous cytoplasmic AU-rich element (ARE)-containing mRNA transcripts by promoting their poly(A) tail removal or deadenylation, and hence provide a mechanism for attenuating protein synthesis (PubMed:10330172, PubMed:10706852, PubMed:10805719, PubMed:15014438, PubMed:15187092, PubMed:15634918, PubMed:17030620, PubMed:19188452, PubMed:20595389, PubMed:21078877, PubMed:22701344, PubMed:27193233). Acts as an 3'-untranslated region (UTR) ARE mRNA-binding adapter protein to communicate signaling events to the mRNA decay machinery (PubMed:21278420). Recruits deadenylase CNOT7 (and probably the CCR4-NOT complex) via association with CNOT1, and hence promotes ARE-mediated mRNA deadenylation (PubMed:21278420). Also functions by recruiting components of the cytoplasmic RNA decay machinery to the bound ARE-containing mRNAs (PubMed:21278420). Self-regulates by destabilizing its own mRNA (PubMed:15187092, PubMed:17288565). Binds to 3'-UTR ARE of numerous mRNAs and of its own mRNA (PubMed:11533235, PubMed:15187092, PubMed:16508014, PubMed:17288565, PubMed:17971298, PubMed:20595389, PubMed:21078877, PubMed:21278420, PubMed:22701344, PubMed:27193233). Plays a role in anti-inflammatory responses; suppresses tumor necrosis factor (TNF)-alpha production by stimulating ARE-mediated TNF-alpha mRNA decay and several other inflammatory ARE-containing mRNAs in interferon (IFN)- and/or lipopolysaccharide (LPS)-induced macrophages (PubMed:15014438, PubMed:16514065, PubMed:8630730, PubMed:9703499). Also plays a role in the regulation of dendritic cell maturation at the post-transcriptional level, and hence operates as part of a negative feedback loop to limit the inflammatory response (By similarity). Promotes ARE-mediated mRNA decay of hypoxia-inducible factor HIF1A mRNA during the response of endothelial cells to hypoxia (By similarity). Positively regulates early adipogenesis of preadipocytes by promoting ARE-mediated mRNA decay of immediate early genes (IEGs) (PubMed:22701344). Negatively regulates hematopoietic/erythroid cell differentiation by promoting ARE-mediated mRNA decay of the transcription factor STAT5B mRNA (By similarity). Plays a role in maintaining skeletal muscle satellite cell quiescence by promoting ARE-mediated mRNA decay of the myogenic determination factor MYOD1 mRNA (PubMed:25815583). Also associates with and regulates the expression of non-ARE-containing target mRNAs at the post-transcriptional level, such as MHC class I mRNAs (By similarity). Participates in association with argonaute RISC catalytic components in the ARE-mediated mRNA decay mechanism; assists microRNA (miRNA) targeting ARE-containing mRNAs (By similarity). May also play a role in the regulation of cytoplasmic mRNA decapping; enhances decapping of ARE-containing RNAs, in vitro (By similarity). Involved in the delivery of target ARE-mRNAs to processing bodies (PBs) (By similarity). In addition to its cytosolic mRNA-decay function, affects nuclear pre-mRNA processing (PubMed:22844456). Negatively regulates nuclear poly(A)-binding protein PABPN1-stimulated polyadenylation activity on ARE-containing pre-mRNA during LPS-stimulated macrophages (PubMed:22844456). Also involved in the regulation of stress granule (SG) and P-body (PB) formation and fusion (PubMed:15967811). Plays a role in the regulation of keratinocyte proliferation, differentiation and apoptosis (By similarity). Plays a role as a tumor suppressor by inhibiting cell proliferation in breast cancer cells (By similarity).</text>
</comment>
<comment type="subunit">
    <text evidence="1 10 11 12 21 26 27 28 29 32 35 36">Associates with cytoplasmic CCR4-NOT and PAN2-PAN3 deadenylase complexes to trigger ARE-containing mRNA deadenylation and decay processes (PubMed:20595389, PubMed:21078877). Part of a mRNA decay activation complex at least composed of poly(A)-specific exoribonucleases CNOT6, EXOSC2 and XRN1 and mRNA-decapping enzymes DCP1A and DCP2 (By similarity). Associates with the RNA exosome complex (By similarity). Interacts (via phosphorylated form) with 14-3-3 proteins; these interactions promote exclusion of ZFP36 from cytoplasmic stress granules in response to arsenite treatment in a MAPKAPK2-dependent manner and does not prevent CCR4-NOT deadenylase complex recruitment or ZFP36-induced ARE-containing mRNA deadenylation and decay processes (PubMed:15014438, PubMed:20595389). Interacts with 14-3-3 proteins; these interactions occur in response to rapamycin in an Akt-dependent manner (By similarity). Interacts with AGO2 and AGO4 (By similarity). Interacts (via C-terminus) with CNOT1; this interaction occurs in a RNA-independent manner and induces mRNA deadenylation (PubMed:21278420). Interacts (via N-terminus) with CNOT6 (By similarity). Interacts with CNOT6L (PubMed:21078877). Interacts (via C-terminus) with CNOT7; this interaction occurs in a RNA-independent manner, induces mRNA deadenylation and is inhibited in a phosphorylation MAPKAPK2-dependent manner (PubMed:20595389, PubMed:21278420). Interacts (via unphosphorylated form) with CNOT8; this interaction occurs in a RNA-independent manner and is inhibited in a phosphorylation MAPKAPK2-dependent manner (PubMed:20595389). Interacts with DCP1A (By similarity). Interacts (via N-terminus) with DCP2 (By similarity). Interacts with EDC3 (By similarity). Interacts (via N-terminus) with EXOSC2 (By similarity). Interacts with heat shock 70 kDa proteins (By similarity). Interacts with KHSRP; this interaction increases upon cytokine-induced treatment (By similarity). Interacts with MAP3K4; this interaction enhances the association with SH3KBP1/CIN85 (By similarity). Interacts with MAPKAPK2; this interaction occurs upon skeletal muscle satellite cell activation (PubMed:25815583). Interacts with NCL (By similarity). Interacts with NUP214; this interaction increases upon lipopolysaccharide (LPS) stimulation (By similarity). Interacts with PABPC1; this interaction occurs in a RNA-dependent manner (PubMed:20595389, PubMed:21078877). Interacts (via hypophosphorylated form) with PABPN1 (via RRM domain and C-terminal arginine-rich region); this interaction occurs in the nucleus in a RNA-independent manner, decreases in presence of single-stranded poly(A) RNA-oligomer and in a p38 MAPK-dependent-manner and inhibits nuclear poly(A) tail synthesis (PubMed:22844456). Interacts with PAN2 (PubMed:21078877). Interacts (via C3H1-type zinc finger domains) with PKM (By similarity). Interacts (via C3H1-type zinc finger domains) with nuclear RNA poly(A) polymerase (PubMed:22844456). Interacts with PPP2CA; this interaction occurs in LPS-stimulated cells and induces ZFP36 dephosphorylation, and hence may promote ARE-containing mRNAs decay (PubMed:17170118). Interacts (via C-terminus) with PRR5L (via C-terminus); this interaction may accelerate ZFP36-mediated mRNA decay during stress (By similarity). Interacts (via C-terminus) with SFN; this interaction occurs in a phosphorylation-dependent manner (PubMed:11886850). Interacts (via extreme C-terminal region) with SH3KBP1/CIN85 (via SH3 domains); this interaction enhances MAP3K4-induced phosphorylation of ZFP36 at Ser-58 and Ser-85 and does not alter neither ZFP36 binding to ARE-containing transcripts nor TNF-alpha mRNA decay (By similarity). Interacts with XRN1 (By similarity). Interacts (via C-terminus and Ser-178 phosphorylated form) with YWHAB; this interaction occurs in a p38/MAPKAPK2-dependent manner, increases cytoplasmic localization of ZFP36 and protects ZFP36 from Ser-178 dephosphorylation by serine/threonine phosphatase 2A, and hence may be crucial for stabilizing ARE-containing mRNAs (PubMed:14688255, PubMed:17170118). Interacts (via phosphorylated form) with YWHAE (PubMed:21078877). Interacts (via C-terminus) with YWHAG; this interaction occurs in a phosphorylation-dependent manner (PubMed:11886850). Interacts with YWHAH; this interaction occurs in a phosphorylation-dependent manner (PubMed:11886850). Interacts with YWHAQ; this interaction occurs in a phosphorylation-dependent manner (PubMed:11886850). Interacts with (via C-terminus) YWHAZ; this interaction occurs in a phosphorylation-dependent manner (PubMed:11886850). Does not interact with SH3KBP1 (PubMed:20221403). Interacts (via the 4EHP-binding motif) with EIF4E2; the interaction is direct (By similarity). Interacts (via P-P-P-P-G repeats) with GIGYF2; the interaction is direct (PubMed:26763119).</text>
</comment>
<comment type="interaction">
    <interactant intactId="EBI-647803">
        <id>P22893</id>
    </interactant>
    <interactant intactId="EBI-1222758">
        <id>A5YKK6</id>
        <label>CNOT1</label>
    </interactant>
    <organismsDiffer>true</organismsDiffer>
    <experiments>5</experiments>
</comment>
<comment type="interaction">
    <interactant intactId="EBI-647803">
        <id>P22893</id>
    </interactant>
    <interactant intactId="EBI-2105113">
        <id>Q9UIV1</id>
        <label>CNOT7</label>
    </interactant>
    <organismsDiffer>true</organismsDiffer>
    <experiments>3</experiments>
</comment>
<comment type="interaction">
    <interactant intactId="EBI-647803">
        <id>P22893</id>
    </interactant>
    <interactant intactId="EBI-359815">
        <id>P31946</id>
        <label>YWHAB</label>
    </interactant>
    <organismsDiffer>true</organismsDiffer>
    <experiments>5</experiments>
</comment>
<comment type="subcellular location">
    <subcellularLocation>
        <location evidence="9 10 12 17 32">Nucleus</location>
    </subcellularLocation>
    <subcellularLocation>
        <location evidence="9 10 12 17 22 32 34 41">Cytoplasm</location>
    </subcellularLocation>
    <subcellularLocation>
        <location evidence="12 15">Cytoplasmic granule</location>
    </subcellularLocation>
    <subcellularLocation>
        <location evidence="15">Cytoplasm</location>
        <location evidence="15">P-body</location>
    </subcellularLocation>
    <text evidence="1 9 10 12 15 17">Shuttles between nucleus and cytoplasm in a CRM1-dependent manner (PubMed:11796723, PubMed:11886850). Localized predominantly in the cytoplasm in a p38 MAPK- and YWHAB-dependent manner (PubMed:11886850, PubMed:16508015). Colocalizes with SH3KBP1 and MAP3K4 in the cytoplasm (By similarity). Component of cytoplasmic stress granules (SGs) (PubMed:15967811). Localizes to cytoplasmic stress granules upon energy starvation (PubMed:15014438). Localizes in processing bodies (PBs) (By similarity). Excluded from stress granules in a phosphorylation MAPKAPK2-dependent manner (PubMed:15014438). Shuttles in and out of both cytoplasmic P-body and SGs (PubMed:15967811).</text>
</comment>
<comment type="tissue specificity">
    <text evidence="19 30 31 34 35">Expressed in skeletal muscle satellite cells (PubMed:25815583). Strongly expressed in differentiated adipocytes compared to preadipocytes (at protein level) (PubMed:22701344). Expressed in embryonic stem cells (ESCs) (PubMed:24733888). Expressed in heart, placenta, kidney, intestine, liver, lung, thymus, fat and spleen (PubMed:1699942, PubMed:2204625).</text>
</comment>
<comment type="induction">
    <text evidence="8 13 16 17 18 22 25 31 33 34 35 38 41">Up-regulated during adipocyte differentiation (PubMed:17288565, PubMed:22701344). Up-regulated transiently in response to fibroblast growth factor FGF4 in a MAPK-dependent manner in embryonic stem cells (ESCs) (PubMed:24733888). Up-regulated by interferons and/or lipopolysaccharide (LPS) in a STAT1- and p38 MAPK-dependent manner (PubMed:11533235, PubMed:16508014, PubMed:16508015, PubMed:16514065). Down-regulated in muscle satellite cells upon muscle injury (at protein level) (PubMed:25815583). Up-regulated by various mitogens (PubMed:7559666). Up-regulated by LPS and TNF-alpha (PubMed:9703499). Up-regulated by interferon IFN-gamma and/or LPS in a STAT1- and p38 MAPK-dependent manner (PubMed:15187092, PubMed:16514065). Up-regulated in keratinocytes during epidermal repair after wound healing (PubMed:20166898). Down-regulated during the conversion from quiescence to activated satellite cells upon muscle injury (PubMed:23046558, PubMed:25815583).</text>
</comment>
<comment type="domain">
    <text evidence="1">The C3H1-type zinc finger domains are necessary for ARE-binding activity.</text>
</comment>
<comment type="PTM">
    <text evidence="1 8 11 12 16 17 21 27 28 35 39">Phosphorylated (PubMed:11533235). Phosphorylation at serine and/or threonine residues occurs in a p38 MAPK- and MAPKAPK2-dependent manner (PubMed:11533235). Phosphorylated by MAPKAPK2 at Ser-52 and Ser-178; phosphorylation increases its stability and cytoplasmic localization, promotes binding to 14-3-3 adapter proteins and inhibits the recruitment of cytoplasmic CCR4-NOT and PAN2-PAN3 deadenylase complexes to the mRNA decay machinery, thereby inhibiting ZFP36-induced ARE-containing mRNA deadenylation and decay processes (PubMed:14688255, PubMed:15014438, PubMed:16508014, PubMed:16508015, PubMed:17170118, PubMed:20595389, PubMed:21078877). Phosphorylation by MAPKAPK2 does not impair ARE-containing RNA-binding (PubMed:20595389, PubMed:21078877). Phosphorylated in a MAPKAPK2- and p38 MAPK-dependent manner upon skeletal muscle satellite cell activation; this phosphorylation inhibits ZFP36-mediated mRNA decay activity, and hence stabilizes MYOD1 mRNA (PubMed:25815583). Phosphorylated by MAPK1 upon mitogen stimulation (PubMed:14688255, PubMed:7768935). Phosphorylated at Ser-58 and Ser-85; these phosphorylations increase in a SH3KBP1-dependent manner (By similarity). Phosphorylated at serine and threonine residues in a pyruvate kinase PKM- and p38 MAPK-dependent manner (By similarity). Phosphorylation at Ser-52 may participate in the PKM-mediated degradation of ZFP36 in a p38 MAPK-dependent manner (By similarity). Dephosphorylated by serine/threonine phosphatase 2A at Ser-178 (PubMed:11533235, PubMed:17170118).</text>
</comment>
<comment type="PTM">
    <text evidence="1">Ubiquitinated; pyruvate kinase (PKM)-dependent ubiquitination leads to proteasomal degradation through a p38 MAPK signaling pathway.</text>
</comment>
<comment type="disruption phenotype">
    <text evidence="5 6 14 16 20 24 35 40 41">Mice appear normal at birth, but within 1-8 weeks after birth they develop a complex syndrome of cachexia, arthritis, autoimmunity, myeloid hyperplasia and general inflammation (PubMed:8630730). Show precocious skeletal muscle satellite cell activation and increased satellite cell fusion into myofibers (PubMed:25815583). Show higher levels of tumor necrosis factor (TNF)-alpha mRNA and protein in macrophages and an excess of circulating TNF-alpha (PubMed:16508014, PubMed:8630730, PubMed:9703499). Show higher levels of granulocyte-macrophage colony-stimulating factor (GM-CSF) expression in macrophages and an excess of GM-CSF secretion upon lipopolysaccharide (LPS) stimulation (PubMed:10706852). Show higher levels of serine/threonine-protein kinase PLK3 expression in macrophages (PubMed:19188452). Show higher levels of interleukin IL2 expression in splenocytes and T lymphocytes and an excess of IL2 secretion upon T cell activation (PubMed:15634918). Show an increase in the stability of numerous mRNAs, such as TNF-alpha, GM-CSF, IL2 and PLK3 mRNAs (PubMed:10706852, PubMed:15634918, PubMed:17030620, PubMed:19188452, PubMed:9703499). Show an absence of ARE-containing transcript deadenylation (PubMed:10330172). Mice with a double knockout of ZFP36 and MAPKAPK2 show increased amounts of TNF in macrophages almost comparable to single ZFP36 knockout (PubMed:16508014).</text>
</comment>
<feature type="chain" id="PRO_0000089164" description="mRNA decay activator protein ZFP36">
    <location>
        <begin position="1"/>
        <end position="319"/>
    </location>
</feature>
<feature type="repeat" description="P-P-P-P-G">
    <location>
        <begin position="63"/>
        <end position="67"/>
    </location>
</feature>
<feature type="repeat" description="P-P-P-P-G">
    <location>
        <begin position="190"/>
        <end position="194"/>
    </location>
</feature>
<feature type="repeat" description="P-P-P-P-G">
    <location>
        <begin position="211"/>
        <end position="215"/>
    </location>
</feature>
<feature type="zinc finger region" description="C3H1-type 1" evidence="3">
    <location>
        <begin position="95"/>
        <end position="123"/>
    </location>
</feature>
<feature type="zinc finger region" description="C3H1-type 2" evidence="3">
    <location>
        <begin position="133"/>
        <end position="161"/>
    </location>
</feature>
<feature type="region of interest" description="Necessary for localization of ARE-containing mRNAs to processing bodies (PBs)" evidence="1">
    <location>
        <begin position="1"/>
        <end position="166"/>
    </location>
</feature>
<feature type="region of interest" description="Necessary and sufficient for the association with mRNA decay enzymes and mRNA decay activation" evidence="1">
    <location>
        <begin position="1"/>
        <end position="92"/>
    </location>
</feature>
<feature type="region of interest" description="Necessary for nuclear export" evidence="2">
    <location>
        <begin position="1"/>
        <end position="15"/>
    </location>
</feature>
<feature type="region of interest" description="Disordered" evidence="4">
    <location>
        <begin position="65"/>
        <end position="95"/>
    </location>
</feature>
<feature type="region of interest" description="Necessary for nuclear localization" evidence="2">
    <location>
        <begin position="87"/>
        <end position="160"/>
    </location>
</feature>
<feature type="region of interest" description="Necessary for RNA-binding" evidence="1">
    <location>
        <begin position="89"/>
        <end position="165"/>
    </location>
</feature>
<feature type="region of interest" description="Necessary for localization of ARE-containing mRNAs to processing bodies (PBs)" evidence="1">
    <location>
        <begin position="92"/>
        <end position="319"/>
    </location>
</feature>
<feature type="region of interest" description="Necessary for interaction with PABPN1" evidence="32">
    <location>
        <begin position="95"/>
        <end position="186"/>
    </location>
</feature>
<feature type="region of interest" description="Necessary for mRNA decay activation" evidence="1">
    <location>
        <begin position="166"/>
        <end position="319"/>
    </location>
</feature>
<feature type="region of interest" description="Disordered" evidence="4">
    <location>
        <begin position="179"/>
        <end position="309"/>
    </location>
</feature>
<feature type="region of interest" description="Interaction with CNOT1" evidence="1">
    <location>
        <begin position="305"/>
        <end position="319"/>
    </location>
</feature>
<feature type="compositionally biased region" description="Pro residues" evidence="4">
    <location>
        <begin position="65"/>
        <end position="84"/>
    </location>
</feature>
<feature type="compositionally biased region" description="Low complexity" evidence="4">
    <location>
        <begin position="85"/>
        <end position="94"/>
    </location>
</feature>
<feature type="compositionally biased region" description="Low complexity" evidence="4">
    <location>
        <begin position="179"/>
        <end position="188"/>
    </location>
</feature>
<feature type="compositionally biased region" description="Low complexity" evidence="4">
    <location>
        <begin position="196"/>
        <end position="208"/>
    </location>
</feature>
<feature type="compositionally biased region" description="Low complexity" evidence="4">
    <location>
        <begin position="279"/>
        <end position="289"/>
    </location>
</feature>
<feature type="modified residue" description="Phosphoserine; by MAPKAPK2" evidence="11 12 27">
    <location>
        <position position="52"/>
    </location>
</feature>
<feature type="modified residue" description="Phosphoserine" evidence="1">
    <location>
        <position position="58"/>
    </location>
</feature>
<feature type="modified residue" description="Phosphoserine" evidence="11">
    <location>
        <position position="80"/>
    </location>
</feature>
<feature type="modified residue" description="Phosphoserine" evidence="11">
    <location>
        <position position="82"/>
    </location>
</feature>
<feature type="modified residue" description="Phosphothreonine" evidence="1">
    <location>
        <position position="84"/>
    </location>
</feature>
<feature type="modified residue" description="Phosphoserine" evidence="11">
    <location>
        <position position="85"/>
    </location>
</feature>
<feature type="modified residue" description="Phosphoserine; by MAPKAPK2" evidence="11 12 27">
    <location>
        <position position="178"/>
    </location>
</feature>
<feature type="modified residue" description="Phosphoserine" evidence="1">
    <location>
        <position position="189"/>
    </location>
</feature>
<feature type="modified residue" description="Phosphoserine" evidence="1">
    <location>
        <position position="210"/>
    </location>
</feature>
<feature type="modified residue" description="Phosphoserine; by MAPK1; in vitro" evidence="39">
    <location>
        <position position="220"/>
    </location>
</feature>
<feature type="modified residue" description="Phosphothreonine" evidence="11">
    <location>
        <position position="250"/>
    </location>
</feature>
<feature type="modified residue" description="Phosphoserine" evidence="1">
    <location>
        <position position="269"/>
    </location>
</feature>
<feature type="modified residue" description="Phosphoserine" evidence="1">
    <location>
        <position position="289"/>
    </location>
</feature>
<feature type="modified residue" description="Phosphoserine" evidence="11">
    <location>
        <position position="316"/>
    </location>
</feature>
<feature type="mutagenesis site" description="Impairs phosphorylation by MAPKAPK2, decreases its stability and cytoplasmic localization, increases interaction with PPP2CA, inhibits binding to 14-3-3 proteins, but does not impair binding to ARE-containing transcripts, recruitment of mRNA decay factors and ZFP36-mediated deadenylation and decay of ARE-containing transcripts; when associated with A-178." evidence="12 16 17 21 27 28">
    <original>S</original>
    <variation>A</variation>
    <location>
        <position position="52"/>
    </location>
</feature>
<feature type="mutagenesis site" description="Abolished interaction with GIGYF2 and impaired TTP-mediated mRNA repression; when associated with 191-S--S-193." evidence="36">
    <original>PPP</original>
    <variation>SSS</variation>
    <location>
        <begin position="64"/>
        <end position="66"/>
    </location>
</feature>
<feature type="mutagenesis site" description="Reduces both interaction with 14-3-3 proteins and YWHAB-induced cytoplasmic localization. Impairs phosphorylation by MAPKAPK2, decreases its stability and cytoplasmic localization, increases interaction with PPP2CA, inhibits binding to 14-3-3 proteins, but does not impair binding to ARE-containing transcripts, recruitment of mRNA decay factors and ZFP36-mediated deadenylation and decay of ARE-containing transcripts; when associated with A-52." evidence="10 12 16 17 21 27 28">
    <original>S</original>
    <variation>A</variation>
    <location>
        <position position="178"/>
    </location>
</feature>
<feature type="mutagenesis site" description="Abolished interaction with GIGYF2 and impaired TTP-mediated mRNA repression; when associated with 64-S--S-66." evidence="36">
    <original>PPP</original>
    <variation>SSS</variation>
    <location>
        <begin position="191"/>
        <end position="193"/>
    </location>
</feature>
<feature type="mutagenesis site" description="Does not affect interaction with GIGYF2." evidence="36">
    <original>PPP</original>
    <variation>SSS</variation>
    <location>
        <begin position="212"/>
        <end position="214"/>
    </location>
</feature>
<feature type="mutagenesis site" description="Stimulates interaction with SH3KBP1." evidence="26">
    <original>P</original>
    <variation>A</variation>
    <location>
        <position position="303"/>
    </location>
</feature>
<feature type="helix" evidence="48">
    <location>
        <begin position="103"/>
        <end position="106"/>
    </location>
</feature>
<feature type="turn" evidence="48">
    <location>
        <begin position="111"/>
        <end position="115"/>
    </location>
</feature>
<feature type="strand" evidence="48">
    <location>
        <begin position="120"/>
        <end position="122"/>
    </location>
</feature>
<feature type="helix" evidence="48">
    <location>
        <begin position="125"/>
        <end position="127"/>
    </location>
</feature>
<reference key="1">
    <citation type="journal article" date="1990" name="J. Biol. Chem.">
        <title>Rapid insulin-stimulated accumulation of an mRNA encoding a proline-rich protein.</title>
        <authorList>
            <person name="Lai W.S."/>
            <person name="Stumpo D.J."/>
            <person name="Blackshear P.J."/>
        </authorList>
    </citation>
    <scope>NUCLEOTIDE SEQUENCE [MRNA]</scope>
    <scope>TISSUE SPECIFICITY</scope>
</reference>
<reference key="2">
    <citation type="journal article" date="1990" name="J. Biol. Chem.">
        <title>A growth factor-inducible nuclear protein with a novel cysteine/histidine repetitive sequence.</title>
        <authorList>
            <person name="Dubois R.N."/>
            <person name="McLane M.W."/>
            <person name="Ryder K."/>
            <person name="Lau L.F."/>
            <person name="Nathans D."/>
        </authorList>
    </citation>
    <scope>NUCLEOTIDE SEQUENCE [MRNA]</scope>
    <scope>TISSUE SPECIFICITY</scope>
</reference>
<reference key="3">
    <citation type="journal article" date="1989" name="Oncogene">
        <title>Nucleotide sequence of a cDNA encoding TIS11, a message induced in Swiss 3T3 cells by the tumor promoter tetradecanoyl phorbol acetate.</title>
        <authorList>
            <person name="Varnum B.C."/>
            <person name="Lim R.W."/>
            <person name="Sukhatme V.P."/>
            <person name="Herschman H.R."/>
        </authorList>
    </citation>
    <scope>NUCLEOTIDE SEQUENCE [MRNA]</scope>
    <source>
        <strain>SWR/J</strain>
    </source>
</reference>
<reference key="4">
    <citation type="journal article" date="1991" name="Oncogene">
        <title>A corrected sequence for the predicted protein from the mitogen-inducible TIS11 primary response gene.</title>
        <authorList>
            <person name="Ma Q."/>
            <person name="Herschman H.R."/>
        </authorList>
    </citation>
    <scope>SEQUENCE REVISION</scope>
</reference>
<reference key="5">
    <citation type="journal article" date="1991" name="Mol. Cell. Biol.">
        <title>The TIS11 primary response gene is a member of a gene family that encodes proteins with a highly conserved sequence containing an unusual Cys-His repeat.</title>
        <authorList>
            <person name="Varnum B.C."/>
            <person name="Ma Q."/>
            <person name="Chi T."/>
            <person name="Fletcher B.S."/>
            <person name="Herschman H.R."/>
        </authorList>
    </citation>
    <scope>NUCLEOTIDE SEQUENCE [MRNA]</scope>
    <source>
        <strain>BALB/cJ</strain>
    </source>
</reference>
<reference key="6">
    <citation type="journal article" date="1995" name="J. Biol. Chem.">
        <title>Promoter analysis of Zfp-36, the mitogen-inducible gene encoding the zinc finger protein tristetraprolin.</title>
        <authorList>
            <person name="Lai W.S."/>
            <person name="Thompson M.J."/>
            <person name="Taylor G.A."/>
            <person name="Liu Y."/>
            <person name="Blackshear P.J."/>
        </authorList>
    </citation>
    <scope>NUCLEOTIDE SEQUENCE [GENOMIC DNA]</scope>
    <scope>INDUCTION</scope>
    <source>
        <strain>BALB/cJ</strain>
        <tissue>Liver</tissue>
    </source>
</reference>
<reference key="7">
    <citation type="journal article" date="2004" name="Genome Res.">
        <title>The status, quality, and expansion of the NIH full-length cDNA project: the Mammalian Gene Collection (MGC).</title>
        <authorList>
            <consortium name="The MGC Project Team"/>
        </authorList>
    </citation>
    <scope>NUCLEOTIDE SEQUENCE [LARGE SCALE MRNA]</scope>
    <source>
        <strain>FVB/N</strain>
        <tissue>Liver</tissue>
    </source>
</reference>
<reference key="8">
    <citation type="journal article" date="1995" name="J. Biol. Chem.">
        <title>Phosphorylation of tristetraprolin, a potential zinc finger transcription factor, by mitogen stimulation in intact cells and by mitogen-activated protein kinase in vitro.</title>
        <authorList>
            <person name="Taylor G.A."/>
            <person name="Thompson M.J."/>
            <person name="Lai W.S."/>
            <person name="Blackshear P.J."/>
        </authorList>
    </citation>
    <scope>PHOSPHORYLATION AT SER-220 BY MAPK1</scope>
</reference>
<reference key="9">
    <citation type="journal article" date="1996" name="Immunity">
        <title>A pathogenetic role for TNF alpha in the syndrome of cachexia, arthritis, and autoimmunity resulting from tristetraprolin (TTP) deficiency.</title>
        <authorList>
            <person name="Taylor G.A."/>
            <person name="Carballo E."/>
            <person name="Lee D.M."/>
            <person name="Lai W.S."/>
            <person name="Thompson M.J."/>
            <person name="Patel D.D."/>
            <person name="Schenkman D.I."/>
            <person name="Gilkeson G.S."/>
            <person name="Broxmeyer H.E."/>
            <person name="Haynes B.F."/>
            <person name="Blackshear P.J."/>
        </authorList>
    </citation>
    <scope>FUNCTION</scope>
    <scope>DISRUPTION PHENOTYPE</scope>
</reference>
<reference key="10">
    <citation type="journal article" date="1998" name="Science">
        <title>Feedback inhibition of macrophage tumor necrosis factor-alpha production by tristetraprolin.</title>
        <authorList>
            <person name="Carballo E."/>
            <person name="Lai W.S."/>
            <person name="Blackshear P.J."/>
        </authorList>
    </citation>
    <scope>FUNCTION</scope>
    <scope>SUBCELLULAR LOCATION</scope>
    <scope>DISRUPTION PHENOTYPE</scope>
    <scope>INDUCTION</scope>
</reference>
<reference key="11">
    <citation type="journal article" date="1999" name="Mol. Cell. Biol.">
        <title>Evidence that tristetraprolin binds to AU-rich elements and promotes the deadenylation and destabilization of tumor necrosis factor alpha mRNA.</title>
        <authorList>
            <person name="Lai W.S."/>
            <person name="Carballo E."/>
            <person name="Strum J.R."/>
            <person name="Kennington E.A."/>
            <person name="Phillips R.S."/>
            <person name="Blackshear P.J."/>
        </authorList>
    </citation>
    <scope>FUNCTION</scope>
    <scope>RNA-BINDING</scope>
    <scope>DISRUPTION PHENOTYPE</scope>
</reference>
<reference key="12">
    <citation type="journal article" date="2000" name="Blood">
        <title>Evidence that tristetraprolin is a physiological regulator of granulocyte-macrophage colony-stimulating factor messenger RNA deadenylation and stability.</title>
        <authorList>
            <person name="Carballo E."/>
            <person name="Lai W.S."/>
            <person name="Blackshear P.J."/>
        </authorList>
    </citation>
    <scope>FUNCTION</scope>
    <scope>DISRUPTION PHENOTYPE</scope>
</reference>
<reference key="13">
    <citation type="journal article" date="2000" name="Mol. Cell. Biol.">
        <title>Somatic mRNA turnover mutants implicate tristetraprolin in the interleukin-3 mRNA degradation pathway.</title>
        <authorList>
            <person name="Stoecklin G."/>
            <person name="Ming X.F."/>
            <person name="Looser R."/>
            <person name="Moroni C."/>
        </authorList>
    </citation>
    <scope>FUNCTION</scope>
</reference>
<reference key="14">
    <citation type="journal article" date="2001" name="Mol. Cell. Biol.">
        <title>Mitogen-activated protein kinase p38 controls the expression and posttranslational modification of tristetraprolin, a regulator of tumor necrosis factor alpha mRNA stability.</title>
        <authorList>
            <person name="Mahtani K.R."/>
            <person name="Brook M."/>
            <person name="Dean J.L."/>
            <person name="Sully G."/>
            <person name="Saklatvala J."/>
            <person name="Clark A.R."/>
        </authorList>
    </citation>
    <scope>FUNCTION</scope>
    <scope>RNA-BINDING</scope>
    <scope>PHOSPHORYLATION</scope>
    <scope>INDUCTION</scope>
</reference>
<reference key="15">
    <citation type="journal article" date="2002" name="J. Biol. Chem.">
        <title>Members of the tristetraprolin family of tandem CCCH zinc finger proteins exhibit CRM1-dependent nucleocytoplasmic shuttling.</title>
        <authorList>
            <person name="Phillips R.S."/>
            <person name="Ramos S.B."/>
            <person name="Blackshear P.J."/>
        </authorList>
    </citation>
    <scope>SUBCELLULAR LOCATION</scope>
</reference>
<reference key="16">
    <citation type="journal article" date="2002" name="J. Biol. Chem.">
        <title>Cytoplasmic localization of tristetraprolin involves 14-3-3-dependent and -independent mechanisms.</title>
        <authorList>
            <person name="Johnson B.A."/>
            <person name="Stehn J.R."/>
            <person name="Yaffe M.B."/>
            <person name="Blackwell T.K."/>
        </authorList>
    </citation>
    <scope>INTERACTION WITH SFN; YWHAB; YWHAG; YWHAH; YWHAQ AND YWHAZ</scope>
    <scope>SUBCELLULAR LOCATION</scope>
    <scope>MUTAGENESIS OF SER-178</scope>
</reference>
<reference key="17">
    <citation type="journal article" date="2004" name="EMBO J.">
        <title>MK2-induced tristetraprolin:14-3-3 complexes prevent stress granule association and ARE-mRNA decay.</title>
        <authorList>
            <person name="Stoecklin G."/>
            <person name="Stubbs T."/>
            <person name="Kedersha N."/>
            <person name="Wax S."/>
            <person name="Rigby W.F."/>
            <person name="Blackwell T.K."/>
            <person name="Anderson P."/>
        </authorList>
    </citation>
    <scope>FUNCTION</scope>
    <scope>PHOSPHORYLATION AT SER-52 AND SER-178 BY MAPKAPK2</scope>
    <scope>INTERACTION WITH 14-3-3 PROTEINS</scope>
    <scope>SUBCELLULAR LOCATION</scope>
    <scope>RNA-BINDING</scope>
    <scope>MUTAGENESIS OF SER-52 AND SER-178</scope>
</reference>
<reference key="18">
    <citation type="journal article" date="2004" name="J. Biol. Chem.">
        <title>MAPKAP kinase 2 phosphorylates tristetraprolin on in vivo sites including Ser178, a site required for 14-3-3 binding.</title>
        <authorList>
            <person name="Chrestensen C.A."/>
            <person name="Schroeder M.J."/>
            <person name="Shabanowitz J."/>
            <person name="Hunt D.F."/>
            <person name="Pelo J.W."/>
            <person name="Worthington M.T."/>
            <person name="Sturgill T.W."/>
        </authorList>
    </citation>
    <scope>PHOSPHORYLATION AT SER-52 AND SER-178 BY MAPKAPK2; PHOSPHORYLATION AT SER-80; SER-82; SER-85; THR-250 AND SER-316</scope>
    <scope>INTERACTION WITH YWHAB</scope>
    <scope>RNA-BINDING</scope>
    <scope>IDENTIFICATION BY MASS SPECTROMETRY</scope>
</reference>
<reference key="19">
    <citation type="journal article" date="2004" name="J. Biol. Chem.">
        <title>The stability of tristetraprolin mRNA is regulated by mitogen-activated protein kinase p38 and by tristetraprolin itself.</title>
        <authorList>
            <person name="Tchen C.R."/>
            <person name="Brook M."/>
            <person name="Saklatvala J."/>
            <person name="Clark A.R."/>
        </authorList>
    </citation>
    <scope>FUNCTION</scope>
    <scope>RNA-BINDING</scope>
    <scope>INDUCTION</scope>
</reference>
<reference key="20">
    <citation type="journal article" date="2005" name="J. Cell Biol.">
        <title>Stress granules and processing bodies are dynamically linked sites of mRNP remodeling.</title>
        <authorList>
            <person name="Kedersha N."/>
            <person name="Stoecklin G."/>
            <person name="Ayodele M."/>
            <person name="Yacono P."/>
            <person name="Lykke-Andersen J."/>
            <person name="Fritzler M.J."/>
            <person name="Scheuner D."/>
            <person name="Kaufman R.J."/>
            <person name="Golan D.E."/>
            <person name="Anderson P."/>
        </authorList>
    </citation>
    <scope>FUNCTION</scope>
    <scope>SUBCELLULAR LOCATION</scope>
</reference>
<reference key="21">
    <citation type="journal article" date="2005" name="J. Immunol.">
        <title>Tristetraprolin down-regulates IL-2 gene expression through AU-rich element-mediated mRNA decay.</title>
        <authorList>
            <person name="Ogilvie R.L."/>
            <person name="Abelson M."/>
            <person name="Hau H.H."/>
            <person name="Vlasova I."/>
            <person name="Blackshear P.J."/>
            <person name="Bohjanen P.R."/>
        </authorList>
    </citation>
    <scope>FUNCTION</scope>
    <scope>DISRUPTION PHENOTYPE</scope>
</reference>
<reference key="22">
    <citation type="journal article" date="2006" name="Blood">
        <title>Interferons limit inflammatory responses by induction of tristetraprolin.</title>
        <authorList>
            <person name="Sauer I."/>
            <person name="Schaljo B."/>
            <person name="Vogl C."/>
            <person name="Gattermeier I."/>
            <person name="Kolbe T."/>
            <person name="Mueller M."/>
            <person name="Blackshear P.J."/>
            <person name="Kovarik P."/>
        </authorList>
    </citation>
    <scope>FUNCTION</scope>
    <scope>INDUCTION</scope>
</reference>
<reference key="23">
    <citation type="journal article" date="2006" name="Mol. Cell. Biol.">
        <title>Mitogen-activated protein kinase-activated protein kinase 2 regulates tumor necrosis factor mRNA stability and translation mainly by altering tristetraprolin expression, stability, and binding to adenine/uridine-rich element.</title>
        <authorList>
            <person name="Hitti E."/>
            <person name="Iakovleva T."/>
            <person name="Brook M."/>
            <person name="Deppenmeier S."/>
            <person name="Gruber A.D."/>
            <person name="Radzioch D."/>
            <person name="Clark A.R."/>
            <person name="Blackshear P.J."/>
            <person name="Kotlyarov A."/>
            <person name="Gaestel M."/>
        </authorList>
    </citation>
    <scope>PHOSPHORYLATION</scope>
    <scope>RNA-BINDING</scope>
    <scope>DISRUPTION PHENOTYPE</scope>
    <scope>MUTAGENESIS OF SER-52 AND SER-178</scope>
    <scope>INDUCTION</scope>
</reference>
<reference key="24">
    <citation type="journal article" date="2006" name="Mol. Cell. Biol.">
        <title>Posttranslational regulation of tristetraprolin subcellular localization and protein stability by p38 mitogen-activated protein kinase and extracellular signal-regulated kinase pathways.</title>
        <authorList>
            <person name="Brook M."/>
            <person name="Tchen C.R."/>
            <person name="Santalucia T."/>
            <person name="McIlrath J."/>
            <person name="Arthur J.S."/>
            <person name="Saklatvala J."/>
            <person name="Clark A.R."/>
        </authorList>
    </citation>
    <scope>SUBCELLULAR LOCATION</scope>
    <scope>PHOSPHORYLATION</scope>
    <scope>INDUCTION</scope>
    <scope>MUTAGENESIS OF SER-52 AND SER-178</scope>
</reference>
<reference key="25">
    <citation type="journal article" date="2006" name="Mol. Cell. Biol.">
        <title>Novel mRNA targets for tristetraprolin (TTP) identified by global analysis of stabilized transcripts in TTP-deficient fibroblasts.</title>
        <authorList>
            <person name="Lai W.S."/>
            <person name="Parker J.S."/>
            <person name="Grissom S.F."/>
            <person name="Stumpo D.J."/>
            <person name="Blackshear P.J."/>
        </authorList>
    </citation>
    <scope>FUNCTION</scope>
    <scope>DISRUPTION PHENOTYPE</scope>
</reference>
<reference key="26">
    <citation type="journal article" date="2007" name="FEBS J.">
        <title>Regulation of tristetraprolin during differentiation of 3T3-L1 preadipocytes.</title>
        <authorList>
            <person name="Lin N.Y."/>
            <person name="Lin C.T."/>
            <person name="Chen Y.L."/>
            <person name="Chang C.J."/>
        </authorList>
    </citation>
    <scope>FUNCTION</scope>
    <scope>RNA-BINDING</scope>
    <scope>SUBCELLULAR LOCATION</scope>
    <scope>INDUCTION</scope>
</reference>
<reference key="27">
    <citation type="journal article" date="2007" name="J. Biol. Chem.">
        <title>Tristetraprolin (TTP)-14-3-3 complex formation protects TTP from dephosphorylation by protein phosphatase 2a and stabilizes tumor necrosis factor-alpha mRNA.</title>
        <authorList>
            <person name="Sun L."/>
            <person name="Stoecklin G."/>
            <person name="Van Way S."/>
            <person name="Hinkovska-Galcheva V."/>
            <person name="Guo R.F."/>
            <person name="Anderson P."/>
            <person name="Shanley T.P."/>
        </authorList>
    </citation>
    <scope>INTERACTION WITH PPP2CA AND YWHAB</scope>
    <scope>PHOSPHORYLATION AT SER-178 BY MAPKAPK2</scope>
    <scope>DEPHOSPHORYLATION AT SER-178 BY SERINE/THREONINE PHOSPHATASE 2A</scope>
    <scope>MUTAGENESIS OF SER-52 AND SER-178</scope>
</reference>
<reference key="28">
    <citation type="journal article" date="2008" name="Biochem. Biophys. Res. Commun.">
        <title>Modulation of immediate early gene expression by tristetraprolin in the differentiation of 3T3-L1 cells.</title>
        <authorList>
            <person name="Lin N.Y."/>
            <person name="Lin C.T."/>
            <person name="Chang C.J."/>
        </authorList>
    </citation>
    <scope>RNA-BINDING</scope>
</reference>
<reference key="29">
    <citation type="journal article" date="2009" name="Immunity">
        <title>The phagosomal proteome in interferon-gamma-activated macrophages.</title>
        <authorList>
            <person name="Trost M."/>
            <person name="English L."/>
            <person name="Lemieux S."/>
            <person name="Courcelles M."/>
            <person name="Desjardins M."/>
            <person name="Thibault P."/>
        </authorList>
    </citation>
    <scope>IDENTIFICATION BY MASS SPECTROMETRY [LARGE SCALE ANALYSIS]</scope>
</reference>
<reference key="30">
    <citation type="journal article" date="2009" name="Mol. Cell. Biol.">
        <title>Stimulation of polo-like kinase 3 mRNA decay by tristetraprolin.</title>
        <authorList>
            <person name="Horner T.J."/>
            <person name="Lai W.S."/>
            <person name="Stumpo D.J."/>
            <person name="Blackshear P.J."/>
        </authorList>
    </citation>
    <scope>FUNCTION</scope>
    <scope>DISRUPTION PHENOTYPE</scope>
</reference>
<reference key="31">
    <citation type="journal article" date="2010" name="Growth Factors">
        <title>ZFP36L1 is regulated by growth factors and cytokines in keratinocytes and influences their VEGF production.</title>
        <authorList>
            <person name="Hacker C."/>
            <person name="Valchanova R."/>
            <person name="Adams S."/>
            <person name="Munz B."/>
        </authorList>
    </citation>
    <scope>INDUCTION</scope>
</reference>
<reference key="32">
    <citation type="journal article" date="2010" name="J. Biol. Chem.">
        <title>MAPKAP kinase 2 blocks tristetraprolin-directed mRNA decay by inhibiting CAF1 deadenylase recruitment.</title>
        <authorList>
            <person name="Marchese F.P."/>
            <person name="Aubareda A."/>
            <person name="Tudor C."/>
            <person name="Saklatvala J."/>
            <person name="Clark A.R."/>
            <person name="Dean J.L."/>
        </authorList>
    </citation>
    <scope>FUNCTION</scope>
    <scope>PHOSPHORYLATION AT SER-52 AND SER-178 BY MAPKAPK2</scope>
    <scope>RNA-BINDING</scope>
    <scope>INTERACTION WITH 14-3-3 PROTEINS; CNOT7; CNOT8 AND PABPC1</scope>
    <scope>ASSOCIATION WITH THE CCR4-NOT DEADENYLASE COMPLEX</scope>
    <scope>MUTAGENESIS OF SER-52 AND SER-178</scope>
</reference>
<reference key="33">
    <citation type="journal article" date="2010" name="PLoS ONE">
        <title>Phosphorylation of human tristetraprolin in response to its interaction with the Cbl interacting protein CIN85.</title>
        <authorList>
            <person name="Kedar V.P."/>
            <person name="Darby M.K."/>
            <person name="Williams J.G."/>
            <person name="Blackshear P.J."/>
        </authorList>
    </citation>
    <scope>MUTAGENESIS OF PRO-303</scope>
    <scope>LACK OF INTERACTION WITH SH3KBP1</scope>
</reference>
<reference key="34">
    <citation type="journal article" date="2011" name="Mol. Cell. Biol.">
        <title>Phosphorylation of tristetraprolin by MK2 impairs AU-rich element mRNA decay by preventing deadenylase recruitment.</title>
        <authorList>
            <person name="Clement S.L."/>
            <person name="Scheckel C."/>
            <person name="Stoecklin G."/>
            <person name="Lykke-Andersen J."/>
        </authorList>
    </citation>
    <scope>FUNCTION</scope>
    <scope>RNA-BINDING</scope>
    <scope>PHOSPHORYLATION BY MAPKAPK2</scope>
    <scope>INTERACTION WITH CNOT6L; PABPC1; PAN2 AND YWHAE</scope>
    <scope>ASSOCIATION WITH THE CCR4-NOT AND PAN2-PAN3 DEADENYLASE COMPLEXES</scope>
    <scope>MUTAGENESIS OF SER-52 AND SER-178</scope>
</reference>
<reference key="35">
    <citation type="journal article" date="2011" name="Nucleic Acids Res.">
        <title>Not1 mediates recruitment of the deadenylase Caf1 to mRNAs targeted for degradation by tristetraprolin.</title>
        <authorList>
            <person name="Sandler H."/>
            <person name="Kreth J."/>
            <person name="Timmers H.T."/>
            <person name="Stoecklin G."/>
        </authorList>
    </citation>
    <scope>FUNCTION</scope>
    <scope>RNA-BINDING</scope>
    <scope>INTERACTION WITH CNOT1 AND CNOT7</scope>
</reference>
<reference key="36">
    <citation type="journal article" date="2012" name="Int. J. Biol. Sci.">
        <title>Differential expression and functional analysis of the tristetraprolin family during early differentiation of 3T3-L1 preadipocytes.</title>
        <authorList>
            <person name="Lin N.Y."/>
            <person name="Lin T.Y."/>
            <person name="Yang W.H."/>
            <person name="Wang S.C."/>
            <person name="Wang K.T."/>
            <person name="Su Y.L."/>
            <person name="Jiang Y.W."/>
            <person name="Chang G.D."/>
            <person name="Chang C.J."/>
        </authorList>
    </citation>
    <scope>FUNCTION</scope>
    <scope>RNA-BINDING</scope>
    <scope>TISSUE SPECIFICITY</scope>
    <scope>INDUCTION</scope>
</reference>
<reference key="37">
    <citation type="journal article" date="2012" name="PLoS ONE">
        <title>Tristetraprolin inhibits poly(A)-tail synthesis in nuclear mRNA that contains AU-rich elements by interacting with poly(A)-binding protein nuclear 1.</title>
        <authorList>
            <person name="Su Y.L."/>
            <person name="Wang S.C."/>
            <person name="Chi ang P.Y."/>
            <person name="Lin N.Y."/>
            <person name="Shen Y.F."/>
            <person name="Chang G.D."/>
            <person name="Chang C.J."/>
        </authorList>
    </citation>
    <scope>FUNCTION</scope>
    <scope>INTERACTION WITH PABPN1 AND RNA POLY(A) POLYMERASE</scope>
    <scope>SUBCELLULAR LOCATION</scope>
</reference>
<reference key="38">
    <citation type="journal article" date="2012" name="Skelet. Muscle">
        <title>A role for RNA post-transcriptional regulation in satellite cell activation.</title>
        <authorList>
            <person name="Farina N.H."/>
            <person name="Hausburg M."/>
            <person name="Betta N.D."/>
            <person name="Pulliam C."/>
            <person name="Srivastava D."/>
            <person name="Cornelison D."/>
            <person name="Olwin B.B."/>
        </authorList>
    </citation>
    <scope>INDUCTION</scope>
</reference>
<reference key="39">
    <citation type="journal article" date="2014" name="Proc. Natl. Acad. Sci. U.S.A.">
        <title>Brf1 posttranscriptionally regulates pluripotency and differentiation responses downstream of Erk MAP kinase.</title>
        <authorList>
            <person name="Tan F.E."/>
            <person name="Elowitz M.B."/>
        </authorList>
    </citation>
    <scope>SUBCELLULAR LOCATION</scope>
    <scope>TISSUE SPECIFICITY</scope>
    <scope>INDUCTION</scope>
</reference>
<reference key="40">
    <citation type="journal article" date="2015" name="Elife">
        <title>Post-transcriptional regulation of satellite cell quiescence by TTP-mediated mRNA decay.</title>
        <authorList>
            <person name="Hausburg M.A."/>
            <person name="Doles J.D."/>
            <person name="Clement S.L."/>
            <person name="Cadwallader A.B."/>
            <person name="Hall M.N."/>
            <person name="Blackshear P.J."/>
            <person name="Lykke-Andersen J."/>
            <person name="Olwin B.B."/>
        </authorList>
    </citation>
    <scope>INTERACTION WITH MAPKAPK2</scope>
    <scope>PHOSPHORYLATION</scope>
    <scope>TISSUE SPECIFICITY</scope>
    <scope>INDUCTION</scope>
    <scope>DISRUPTION PHENOTYPE</scope>
</reference>
<reference key="41">
    <citation type="journal article" date="2016" name="Amino Acids">
        <title>Destabilization of the ornithine decarboxylase mRNA transcript by the RNA-binding protein tristetraprolin.</title>
        <authorList>
            <person name="Nowotarski S.L."/>
            <person name="Origanti S."/>
            <person name="Sass-Kuhn S."/>
            <person name="Shantz L.M."/>
        </authorList>
    </citation>
    <scope>FUNCTION</scope>
    <scope>RNA-BINDING</scope>
</reference>
<reference key="42">
    <citation type="journal article" date="2016" name="RNA">
        <title>Recruitment of the 4EHP-GYF2 cap-binding complex to tetraproline motifs of tristetraprolin promotes repression and degradation of mRNAs with AU-rich elements.</title>
        <authorList>
            <person name="Fu R."/>
            <person name="Olsen M.T."/>
            <person name="Webb K."/>
            <person name="Bennett E.J."/>
            <person name="Lykke-Andersen J."/>
        </authorList>
    </citation>
    <scope>INTERACTION WITH GIGYF2</scope>
    <scope>MUTAGENESIS OF 64-PRO--PRO-66; 191-PRO--PRO-193 AND 212-PRO--PRO-214</scope>
</reference>
<reference key="43">
    <citation type="journal article" date="2003" name="Biochemistry">
        <title>A Cys3His zinc-binding domain from Nup475/tristetraprolin: a novel fold with a disklike structure.</title>
        <authorList>
            <person name="Amann B.T."/>
            <person name="Worthington M.T."/>
            <person name="Berg J.M."/>
        </authorList>
    </citation>
    <scope>STRUCTURE BY NMR OF 91-163 IN COMPLEX WITH ZINC</scope>
</reference>
<evidence type="ECO:0000250" key="1">
    <source>
        <dbReference type="UniProtKB" id="P26651"/>
    </source>
</evidence>
<evidence type="ECO:0000250" key="2">
    <source>
        <dbReference type="UniProtKB" id="P47973"/>
    </source>
</evidence>
<evidence type="ECO:0000255" key="3">
    <source>
        <dbReference type="PROSITE-ProRule" id="PRU00723"/>
    </source>
</evidence>
<evidence type="ECO:0000256" key="4">
    <source>
        <dbReference type="SAM" id="MobiDB-lite"/>
    </source>
</evidence>
<evidence type="ECO:0000269" key="5">
    <source>
    </source>
</evidence>
<evidence type="ECO:0000269" key="6">
    <source>
    </source>
</evidence>
<evidence type="ECO:0000269" key="7">
    <source>
    </source>
</evidence>
<evidence type="ECO:0000269" key="8">
    <source>
    </source>
</evidence>
<evidence type="ECO:0000269" key="9">
    <source>
    </source>
</evidence>
<evidence type="ECO:0000269" key="10">
    <source>
    </source>
</evidence>
<evidence type="ECO:0000269" key="11">
    <source>
    </source>
</evidence>
<evidence type="ECO:0000269" key="12">
    <source>
    </source>
</evidence>
<evidence type="ECO:0000269" key="13">
    <source>
    </source>
</evidence>
<evidence type="ECO:0000269" key="14">
    <source>
    </source>
</evidence>
<evidence type="ECO:0000269" key="15">
    <source>
    </source>
</evidence>
<evidence type="ECO:0000269" key="16">
    <source>
    </source>
</evidence>
<evidence type="ECO:0000269" key="17">
    <source>
    </source>
</evidence>
<evidence type="ECO:0000269" key="18">
    <source>
    </source>
</evidence>
<evidence type="ECO:0000269" key="19">
    <source>
    </source>
</evidence>
<evidence type="ECO:0000269" key="20">
    <source>
    </source>
</evidence>
<evidence type="ECO:0000269" key="21">
    <source>
    </source>
</evidence>
<evidence type="ECO:0000269" key="22">
    <source>
    </source>
</evidence>
<evidence type="ECO:0000269" key="23">
    <source>
    </source>
</evidence>
<evidence type="ECO:0000269" key="24">
    <source>
    </source>
</evidence>
<evidence type="ECO:0000269" key="25">
    <source>
    </source>
</evidence>
<evidence type="ECO:0000269" key="26">
    <source>
    </source>
</evidence>
<evidence type="ECO:0000269" key="27">
    <source>
    </source>
</evidence>
<evidence type="ECO:0000269" key="28">
    <source>
    </source>
</evidence>
<evidence type="ECO:0000269" key="29">
    <source>
    </source>
</evidence>
<evidence type="ECO:0000269" key="30">
    <source>
    </source>
</evidence>
<evidence type="ECO:0000269" key="31">
    <source>
    </source>
</evidence>
<evidence type="ECO:0000269" key="32">
    <source>
    </source>
</evidence>
<evidence type="ECO:0000269" key="33">
    <source>
    </source>
</evidence>
<evidence type="ECO:0000269" key="34">
    <source>
    </source>
</evidence>
<evidence type="ECO:0000269" key="35">
    <source>
    </source>
</evidence>
<evidence type="ECO:0000269" key="36">
    <source>
    </source>
</evidence>
<evidence type="ECO:0000269" key="37">
    <source>
    </source>
</evidence>
<evidence type="ECO:0000269" key="38">
    <source>
    </source>
</evidence>
<evidence type="ECO:0000269" key="39">
    <source>
    </source>
</evidence>
<evidence type="ECO:0000269" key="40">
    <source>
    </source>
</evidence>
<evidence type="ECO:0000269" key="41">
    <source>
    </source>
</evidence>
<evidence type="ECO:0000303" key="42">
    <source>
    </source>
</evidence>
<evidence type="ECO:0000303" key="43">
    <source>
    </source>
</evidence>
<evidence type="ECO:0000303" key="44">
    <source>
    </source>
</evidence>
<evidence type="ECO:0000303" key="45">
    <source>
    </source>
</evidence>
<evidence type="ECO:0000305" key="46"/>
<evidence type="ECO:0000312" key="47">
    <source>
        <dbReference type="MGI" id="MGI:99180"/>
    </source>
</evidence>
<evidence type="ECO:0007829" key="48">
    <source>
        <dbReference type="PDB" id="1M9O"/>
    </source>
</evidence>
<sequence length="319" mass="33613">MDLSAIYESLQSMSHDLSSDHGGTESLGGLWNINSDSIPSGVTSRLTGRSTSLVEGRSCGWVPPPPGFAPLAPRPGPELSPSPTSPTATPTTSSRYKTELCRTYSESGRCRYGAKCQFAHGLGELRQANRHPKYKTELCHKFYLQGRCPYGSRCHFIHNPTEDLALPGQPHVLRQSISFSGLPSGRRSSPPPPGFSGPSLSSCSFSPSSSPPPPGDLPLSPSAFSAAPGTPVTRRDPNQACCPSCRRSTTPSTIWGPLGGLARSPSAHSLGSDPDDYASSGSSLGGSDSPVFEAGVFGPPQTPAPPRRLPIFNRISVSE</sequence>
<protein>
    <recommendedName>
        <fullName evidence="46">mRNA decay activator protein ZFP36</fullName>
    </recommendedName>
    <alternativeName>
        <fullName evidence="46">Growth factor-inducible nuclear protein NUP475</fullName>
    </alternativeName>
    <alternativeName>
        <fullName evidence="44">TPA-induced sequence 11</fullName>
    </alternativeName>
    <alternativeName>
        <fullName evidence="43">Tristetraprolin</fullName>
    </alternativeName>
    <alternativeName>
        <fullName evidence="45 47">Zinc finger protein 36</fullName>
        <shortName evidence="45">Zfp-36</shortName>
    </alternativeName>
</protein>
<accession>P22893</accession>
<accession>P11520</accession>
<proteinExistence type="evidence at protein level"/>
<gene>
    <name evidence="45 47" type="primary">Zfp36</name>
    <name evidence="42" type="synonym">Nup475</name>
    <name evidence="44" type="synonym">Tis11</name>
    <name type="synonym">Tis11a</name>
    <name evidence="43" type="synonym">Ttp</name>
</gene>
<dbReference type="EMBL" id="M57422">
    <property type="protein sequence ID" value="AAA40498.1"/>
    <property type="molecule type" value="mRNA"/>
</dbReference>
<dbReference type="EMBL" id="M58691">
    <property type="protein sequence ID" value="AAA39837.1"/>
    <property type="molecule type" value="mRNA"/>
</dbReference>
<dbReference type="EMBL" id="X14678">
    <property type="protein sequence ID" value="CAA32807.1"/>
    <property type="status" value="ALT_SEQ"/>
    <property type="molecule type" value="mRNA"/>
</dbReference>
<dbReference type="EMBL" id="M58565">
    <property type="protein sequence ID" value="AAA72947.1"/>
    <property type="molecule type" value="mRNA"/>
</dbReference>
<dbReference type="EMBL" id="L42317">
    <property type="protein sequence ID" value="AAC37676.1"/>
    <property type="molecule type" value="Genomic_DNA"/>
</dbReference>
<dbReference type="EMBL" id="BC021391">
    <property type="protein sequence ID" value="AAH21391.1"/>
    <property type="molecule type" value="mRNA"/>
</dbReference>
<dbReference type="CCDS" id="CCDS21041.1"/>
<dbReference type="PIR" id="A36600">
    <property type="entry name" value="A36600"/>
</dbReference>
<dbReference type="PIR" id="S04743">
    <property type="entry name" value="S04743"/>
</dbReference>
<dbReference type="RefSeq" id="NP_035886.1">
    <property type="nucleotide sequence ID" value="NM_011756.5"/>
</dbReference>
<dbReference type="PDB" id="1M9O">
    <property type="method" value="NMR"/>
    <property type="chains" value="A=91-163"/>
</dbReference>
<dbReference type="PDBsum" id="1M9O"/>
<dbReference type="SMR" id="P22893"/>
<dbReference type="BioGRID" id="204658">
    <property type="interactions" value="7"/>
</dbReference>
<dbReference type="FunCoup" id="P22893">
    <property type="interactions" value="160"/>
</dbReference>
<dbReference type="IntAct" id="P22893">
    <property type="interactions" value="34"/>
</dbReference>
<dbReference type="MINT" id="P22893"/>
<dbReference type="STRING" id="10090.ENSMUSP00000057815"/>
<dbReference type="iPTMnet" id="P22893"/>
<dbReference type="PhosphoSitePlus" id="P22893"/>
<dbReference type="jPOST" id="P22893"/>
<dbReference type="PaxDb" id="10090-ENSMUSP00000057815"/>
<dbReference type="PeptideAtlas" id="P22893"/>
<dbReference type="ProteomicsDB" id="300052"/>
<dbReference type="Antibodypedia" id="1121">
    <property type="antibodies" value="398 antibodies from 26 providers"/>
</dbReference>
<dbReference type="DNASU" id="22695"/>
<dbReference type="Ensembl" id="ENSMUST00000051241.7">
    <property type="protein sequence ID" value="ENSMUSP00000057815.6"/>
    <property type="gene ID" value="ENSMUSG00000044786.7"/>
</dbReference>
<dbReference type="GeneID" id="22695"/>
<dbReference type="KEGG" id="mmu:22695"/>
<dbReference type="UCSC" id="uc009fys.1">
    <property type="organism name" value="mouse"/>
</dbReference>
<dbReference type="AGR" id="MGI:99180"/>
<dbReference type="CTD" id="7538"/>
<dbReference type="MGI" id="MGI:99180">
    <property type="gene designation" value="Zfp36"/>
</dbReference>
<dbReference type="VEuPathDB" id="HostDB:ENSMUSG00000044786"/>
<dbReference type="eggNOG" id="KOG1677">
    <property type="taxonomic scope" value="Eukaryota"/>
</dbReference>
<dbReference type="GeneTree" id="ENSGT00940000162360"/>
<dbReference type="HOGENOM" id="CLU_033040_2_0_1"/>
<dbReference type="InParanoid" id="P22893"/>
<dbReference type="OMA" id="VFDQHPV"/>
<dbReference type="OrthoDB" id="410307at2759"/>
<dbReference type="PhylomeDB" id="P22893"/>
<dbReference type="TreeFam" id="TF315463"/>
<dbReference type="Reactome" id="R-MMU-450513">
    <property type="pathway name" value="Tristetraprolin (TTP, ZFP36) binds and destabilizes mRNA"/>
</dbReference>
<dbReference type="BioGRID-ORCS" id="22695">
    <property type="hits" value="5 hits in 81 CRISPR screens"/>
</dbReference>
<dbReference type="ChiTaRS" id="Zfp36">
    <property type="organism name" value="mouse"/>
</dbReference>
<dbReference type="EvolutionaryTrace" id="P22893"/>
<dbReference type="PRO" id="PR:P22893"/>
<dbReference type="Proteomes" id="UP000000589">
    <property type="component" value="Chromosome 7"/>
</dbReference>
<dbReference type="RNAct" id="P22893">
    <property type="molecule type" value="protein"/>
</dbReference>
<dbReference type="Bgee" id="ENSMUSG00000044786">
    <property type="expression patterns" value="Expressed in granulocyte and 214 other cell types or tissues"/>
</dbReference>
<dbReference type="ExpressionAtlas" id="P22893">
    <property type="expression patterns" value="baseline and differential"/>
</dbReference>
<dbReference type="GO" id="GO:0005737">
    <property type="term" value="C:cytoplasm"/>
    <property type="evidence" value="ECO:0000314"/>
    <property type="project" value="UniProtKB"/>
</dbReference>
<dbReference type="GO" id="GO:0010494">
    <property type="term" value="C:cytoplasmic stress granule"/>
    <property type="evidence" value="ECO:0000250"/>
    <property type="project" value="UniProtKB"/>
</dbReference>
<dbReference type="GO" id="GO:0005829">
    <property type="term" value="C:cytosol"/>
    <property type="evidence" value="ECO:0000314"/>
    <property type="project" value="MGI"/>
</dbReference>
<dbReference type="GO" id="GO:0005634">
    <property type="term" value="C:nucleus"/>
    <property type="evidence" value="ECO:0000314"/>
    <property type="project" value="UniProtKB"/>
</dbReference>
<dbReference type="GO" id="GO:0000932">
    <property type="term" value="C:P-body"/>
    <property type="evidence" value="ECO:0000250"/>
    <property type="project" value="UniProtKB"/>
</dbReference>
<dbReference type="GO" id="GO:1990904">
    <property type="term" value="C:ribonucleoprotein complex"/>
    <property type="evidence" value="ECO:0000314"/>
    <property type="project" value="UniProtKB"/>
</dbReference>
<dbReference type="GO" id="GO:0071889">
    <property type="term" value="F:14-3-3 protein binding"/>
    <property type="evidence" value="ECO:0000314"/>
    <property type="project" value="UniProtKB"/>
</dbReference>
<dbReference type="GO" id="GO:0003677">
    <property type="term" value="F:DNA binding"/>
    <property type="evidence" value="ECO:0007669"/>
    <property type="project" value="UniProtKB-KW"/>
</dbReference>
<dbReference type="GO" id="GO:0035925">
    <property type="term" value="F:mRNA 3'-UTR AU-rich region binding"/>
    <property type="evidence" value="ECO:0000314"/>
    <property type="project" value="UniProtKB"/>
</dbReference>
<dbReference type="GO" id="GO:0003729">
    <property type="term" value="F:mRNA binding"/>
    <property type="evidence" value="ECO:0000314"/>
    <property type="project" value="UniProtKB"/>
</dbReference>
<dbReference type="GO" id="GO:0070063">
    <property type="term" value="F:RNA polymerase binding"/>
    <property type="evidence" value="ECO:0000314"/>
    <property type="project" value="UniProtKB"/>
</dbReference>
<dbReference type="GO" id="GO:0008270">
    <property type="term" value="F:zinc ion binding"/>
    <property type="evidence" value="ECO:0007669"/>
    <property type="project" value="UniProtKB-KW"/>
</dbReference>
<dbReference type="GO" id="GO:0061158">
    <property type="term" value="P:3'-UTR-mediated mRNA destabilization"/>
    <property type="evidence" value="ECO:0000314"/>
    <property type="project" value="UniProtKB"/>
</dbReference>
<dbReference type="GO" id="GO:0070935">
    <property type="term" value="P:3'-UTR-mediated mRNA stabilization"/>
    <property type="evidence" value="ECO:0000250"/>
    <property type="project" value="UniProtKB"/>
</dbReference>
<dbReference type="GO" id="GO:0071364">
    <property type="term" value="P:cellular response to epidermal growth factor stimulus"/>
    <property type="evidence" value="ECO:0000250"/>
    <property type="project" value="UniProtKB"/>
</dbReference>
<dbReference type="GO" id="GO:0044344">
    <property type="term" value="P:cellular response to fibroblast growth factor stimulus"/>
    <property type="evidence" value="ECO:0000314"/>
    <property type="project" value="UniProtKB"/>
</dbReference>
<dbReference type="GO" id="GO:0071385">
    <property type="term" value="P:cellular response to glucocorticoid stimulus"/>
    <property type="evidence" value="ECO:0000250"/>
    <property type="project" value="UniProtKB"/>
</dbReference>
<dbReference type="GO" id="GO:0097011">
    <property type="term" value="P:cellular response to granulocyte macrophage colony-stimulating factor stimulus"/>
    <property type="evidence" value="ECO:0000250"/>
    <property type="project" value="UniProtKB"/>
</dbReference>
<dbReference type="GO" id="GO:0071222">
    <property type="term" value="P:cellular response to lipopolysaccharide"/>
    <property type="evidence" value="ECO:0000314"/>
    <property type="project" value="UniProtKB"/>
</dbReference>
<dbReference type="GO" id="GO:0071356">
    <property type="term" value="P:cellular response to tumor necrosis factor"/>
    <property type="evidence" value="ECO:0000314"/>
    <property type="project" value="UniProtKB"/>
</dbReference>
<dbReference type="GO" id="GO:0060218">
    <property type="term" value="P:hematopoietic stem cell differentiation"/>
    <property type="evidence" value="ECO:0000315"/>
    <property type="project" value="MGI"/>
</dbReference>
<dbReference type="GO" id="GO:0035556">
    <property type="term" value="P:intracellular signal transduction"/>
    <property type="evidence" value="ECO:0000314"/>
    <property type="project" value="MGI"/>
</dbReference>
<dbReference type="GO" id="GO:0000165">
    <property type="term" value="P:MAPK cascade"/>
    <property type="evidence" value="ECO:0000314"/>
    <property type="project" value="UniProtKB"/>
</dbReference>
<dbReference type="GO" id="GO:0035278">
    <property type="term" value="P:miRNA-mediated gene silencing by inhibition of translation"/>
    <property type="evidence" value="ECO:0000314"/>
    <property type="project" value="UniProtKB"/>
</dbReference>
<dbReference type="GO" id="GO:0006402">
    <property type="term" value="P:mRNA catabolic process"/>
    <property type="evidence" value="ECO:0000250"/>
    <property type="project" value="UniProtKB"/>
</dbReference>
<dbReference type="GO" id="GO:0051028">
    <property type="term" value="P:mRNA transport"/>
    <property type="evidence" value="ECO:0000250"/>
    <property type="project" value="UniProtKB"/>
</dbReference>
<dbReference type="GO" id="GO:0030099">
    <property type="term" value="P:myeloid cell differentiation"/>
    <property type="evidence" value="ECO:0000315"/>
    <property type="project" value="MGI"/>
</dbReference>
<dbReference type="GO" id="GO:0045647">
    <property type="term" value="P:negative regulation of erythrocyte differentiation"/>
    <property type="evidence" value="ECO:0000250"/>
    <property type="project" value="UniProtKB"/>
</dbReference>
<dbReference type="GO" id="GO:1902037">
    <property type="term" value="P:negative regulation of hematopoietic stem cell differentiation"/>
    <property type="evidence" value="ECO:0000315"/>
    <property type="project" value="MGI"/>
</dbReference>
<dbReference type="GO" id="GO:0050728">
    <property type="term" value="P:negative regulation of inflammatory response"/>
    <property type="evidence" value="ECO:0000315"/>
    <property type="project" value="UniProtKB"/>
</dbReference>
<dbReference type="GO" id="GO:0032703">
    <property type="term" value="P:negative regulation of interleukin-2 production"/>
    <property type="evidence" value="ECO:0000315"/>
    <property type="project" value="UniProtKB"/>
</dbReference>
<dbReference type="GO" id="GO:0045638">
    <property type="term" value="P:negative regulation of myeloid cell differentiation"/>
    <property type="evidence" value="ECO:0000315"/>
    <property type="project" value="MGI"/>
</dbReference>
<dbReference type="GO" id="GO:1904246">
    <property type="term" value="P:negative regulation of polynucleotide adenylyltransferase activity"/>
    <property type="evidence" value="ECO:0000315"/>
    <property type="project" value="UniProtKB"/>
</dbReference>
<dbReference type="GO" id="GO:0000122">
    <property type="term" value="P:negative regulation of transcription by RNA polymerase II"/>
    <property type="evidence" value="ECO:0000315"/>
    <property type="project" value="UniProtKB"/>
</dbReference>
<dbReference type="GO" id="GO:0032897">
    <property type="term" value="P:negative regulation of viral transcription"/>
    <property type="evidence" value="ECO:0000250"/>
    <property type="project" value="UniProtKB"/>
</dbReference>
<dbReference type="GO" id="GO:0000288">
    <property type="term" value="P:nuclear-transcribed mRNA catabolic process, deadenylation-dependent decay"/>
    <property type="evidence" value="ECO:0000314"/>
    <property type="project" value="MGI"/>
</dbReference>
<dbReference type="GO" id="GO:0031086">
    <property type="term" value="P:nuclear-transcribed mRNA catabolic process, deadenylation-independent decay"/>
    <property type="evidence" value="ECO:0000250"/>
    <property type="project" value="UniProtKB"/>
</dbReference>
<dbReference type="GO" id="GO:0000289">
    <property type="term" value="P:nuclear-transcribed mRNA poly(A) tail shortening"/>
    <property type="evidence" value="ECO:0000314"/>
    <property type="project" value="MGI"/>
</dbReference>
<dbReference type="GO" id="GO:0038066">
    <property type="term" value="P:p38MAPK cascade"/>
    <property type="evidence" value="ECO:0000314"/>
    <property type="project" value="UniProtKB"/>
</dbReference>
<dbReference type="GO" id="GO:1901835">
    <property type="term" value="P:positive regulation of deadenylation-independent decapping of nuclear-transcribed mRNA"/>
    <property type="evidence" value="ECO:0000250"/>
    <property type="project" value="UniProtKB"/>
</dbReference>
<dbReference type="GO" id="GO:0045600">
    <property type="term" value="P:positive regulation of fat cell differentiation"/>
    <property type="evidence" value="ECO:0000314"/>
    <property type="project" value="UniProtKB"/>
</dbReference>
<dbReference type="GO" id="GO:1904582">
    <property type="term" value="P:positive regulation of intracellular mRNA localization"/>
    <property type="evidence" value="ECO:0000250"/>
    <property type="project" value="UniProtKB"/>
</dbReference>
<dbReference type="GO" id="GO:2000637">
    <property type="term" value="P:positive regulation of miRNA-mediated gene silencing"/>
    <property type="evidence" value="ECO:0000250"/>
    <property type="project" value="UniProtKB"/>
</dbReference>
<dbReference type="GO" id="GO:0061014">
    <property type="term" value="P:positive regulation of mRNA catabolic process"/>
    <property type="evidence" value="ECO:0000315"/>
    <property type="project" value="UniProtKB"/>
</dbReference>
<dbReference type="GO" id="GO:1900153">
    <property type="term" value="P:positive regulation of nuclear-transcribed mRNA catabolic process, deadenylation-dependent decay"/>
    <property type="evidence" value="ECO:0000314"/>
    <property type="project" value="UniProtKB"/>
</dbReference>
<dbReference type="GO" id="GO:0060213">
    <property type="term" value="P:positive regulation of nuclear-transcribed mRNA poly(A) tail shortening"/>
    <property type="evidence" value="ECO:0000314"/>
    <property type="project" value="UniProtKB"/>
</dbReference>
<dbReference type="GO" id="GO:1902172">
    <property type="term" value="P:regulation of keratinocyte apoptotic process"/>
    <property type="evidence" value="ECO:0000250"/>
    <property type="project" value="UniProtKB"/>
</dbReference>
<dbReference type="GO" id="GO:0045616">
    <property type="term" value="P:regulation of keratinocyte differentiation"/>
    <property type="evidence" value="ECO:0000250"/>
    <property type="project" value="UniProtKB"/>
</dbReference>
<dbReference type="GO" id="GO:0010837">
    <property type="term" value="P:regulation of keratinocyte proliferation"/>
    <property type="evidence" value="ECO:0000250"/>
    <property type="project" value="UniProtKB"/>
</dbReference>
<dbReference type="GO" id="GO:0043488">
    <property type="term" value="P:regulation of mRNA stability"/>
    <property type="evidence" value="ECO:0000314"/>
    <property type="project" value="UniProtKB"/>
</dbReference>
<dbReference type="GO" id="GO:0006357">
    <property type="term" value="P:regulation of transcription by RNA polymerase II"/>
    <property type="evidence" value="ECO:0000316"/>
    <property type="project" value="MGI"/>
</dbReference>
<dbReference type="GO" id="GO:0032680">
    <property type="term" value="P:regulation of tumor necrosis factor production"/>
    <property type="evidence" value="ECO:0000250"/>
    <property type="project" value="UniProtKB"/>
</dbReference>
<dbReference type="GO" id="GO:0042594">
    <property type="term" value="P:response to starvation"/>
    <property type="evidence" value="ECO:0000250"/>
    <property type="project" value="UniProtKB"/>
</dbReference>
<dbReference type="GO" id="GO:0009611">
    <property type="term" value="P:response to wounding"/>
    <property type="evidence" value="ECO:0000314"/>
    <property type="project" value="UniProtKB"/>
</dbReference>
<dbReference type="GO" id="GO:0050779">
    <property type="term" value="P:RNA destabilization"/>
    <property type="evidence" value="ECO:0000315"/>
    <property type="project" value="MGI"/>
</dbReference>
<dbReference type="DisProt" id="DP02870"/>
<dbReference type="FunFam" id="4.10.1000.10:FF:000001">
    <property type="entry name" value="zinc finger CCCH domain-containing protein 15-like"/>
    <property type="match status" value="1"/>
</dbReference>
<dbReference type="FunFam" id="4.10.1000.10:FF:000002">
    <property type="entry name" value="Zinc finger protein 36, C3H1 type-like 1"/>
    <property type="match status" value="1"/>
</dbReference>
<dbReference type="Gene3D" id="4.10.1000.10">
    <property type="entry name" value="Zinc finger, CCCH-type"/>
    <property type="match status" value="2"/>
</dbReference>
<dbReference type="IDEAL" id="IID50272"/>
<dbReference type="InterPro" id="IPR045877">
    <property type="entry name" value="ZFP36-like"/>
</dbReference>
<dbReference type="InterPro" id="IPR000571">
    <property type="entry name" value="Znf_CCCH"/>
</dbReference>
<dbReference type="InterPro" id="IPR036855">
    <property type="entry name" value="Znf_CCCH_sf"/>
</dbReference>
<dbReference type="PANTHER" id="PTHR12547">
    <property type="entry name" value="CCCH ZINC FINGER/TIS11-RELATED"/>
    <property type="match status" value="1"/>
</dbReference>
<dbReference type="PANTHER" id="PTHR12547:SF58">
    <property type="entry name" value="MRNA DECAY ACTIVATOR PROTEIN ZFP36"/>
    <property type="match status" value="1"/>
</dbReference>
<dbReference type="Pfam" id="PF00642">
    <property type="entry name" value="zf-CCCH"/>
    <property type="match status" value="2"/>
</dbReference>
<dbReference type="SMART" id="SM00356">
    <property type="entry name" value="ZnF_C3H1"/>
    <property type="match status" value="2"/>
</dbReference>
<dbReference type="SUPFAM" id="SSF90229">
    <property type="entry name" value="CCCH zinc finger"/>
    <property type="match status" value="2"/>
</dbReference>
<dbReference type="PROSITE" id="PS50103">
    <property type="entry name" value="ZF_C3H1"/>
    <property type="match status" value="2"/>
</dbReference>
<keyword id="KW-0002">3D-structure</keyword>
<keyword id="KW-0963">Cytoplasm</keyword>
<keyword id="KW-0217">Developmental protein</keyword>
<keyword id="KW-0238">DNA-binding</keyword>
<keyword id="KW-0271">Exosome</keyword>
<keyword id="KW-0479">Metal-binding</keyword>
<keyword id="KW-0509">mRNA transport</keyword>
<keyword id="KW-0539">Nucleus</keyword>
<keyword id="KW-0597">Phosphoprotein</keyword>
<keyword id="KW-1185">Reference proteome</keyword>
<keyword id="KW-0677">Repeat</keyword>
<keyword id="KW-0687">Ribonucleoprotein</keyword>
<keyword id="KW-0813">Transport</keyword>
<keyword id="KW-0832">Ubl conjugation</keyword>
<keyword id="KW-0862">Zinc</keyword>
<keyword id="KW-0863">Zinc-finger</keyword>
<organism>
    <name type="scientific">Mus musculus</name>
    <name type="common">Mouse</name>
    <dbReference type="NCBI Taxonomy" id="10090"/>
    <lineage>
        <taxon>Eukaryota</taxon>
        <taxon>Metazoa</taxon>
        <taxon>Chordata</taxon>
        <taxon>Craniata</taxon>
        <taxon>Vertebrata</taxon>
        <taxon>Euteleostomi</taxon>
        <taxon>Mammalia</taxon>
        <taxon>Eutheria</taxon>
        <taxon>Euarchontoglires</taxon>
        <taxon>Glires</taxon>
        <taxon>Rodentia</taxon>
        <taxon>Myomorpha</taxon>
        <taxon>Muroidea</taxon>
        <taxon>Muridae</taxon>
        <taxon>Murinae</taxon>
        <taxon>Mus</taxon>
        <taxon>Mus</taxon>
    </lineage>
</organism>
<name>TTP_MOUSE</name>